<name>CLAP2_MOUSE</name>
<dbReference type="EMBL" id="AJ276961">
    <property type="protein sequence ID" value="CAC35161.1"/>
    <property type="molecule type" value="mRNA"/>
</dbReference>
<dbReference type="EMBL" id="AK043551">
    <property type="protein sequence ID" value="BAC31579.1"/>
    <property type="molecule type" value="mRNA"/>
</dbReference>
<dbReference type="EMBL" id="AK005146">
    <property type="protein sequence ID" value="BAB23842.1"/>
    <property type="molecule type" value="mRNA"/>
</dbReference>
<dbReference type="EMBL" id="BC030468">
    <property type="protein sequence ID" value="AAH30468.1"/>
    <property type="molecule type" value="mRNA"/>
</dbReference>
<dbReference type="EMBL" id="AB093252">
    <property type="protein sequence ID" value="BAC41436.2"/>
    <property type="status" value="ALT_FRAME"/>
    <property type="molecule type" value="Transcribed_RNA"/>
</dbReference>
<dbReference type="CCDS" id="CCDS52948.1">
    <molecule id="Q8BRT1-1"/>
</dbReference>
<dbReference type="RefSeq" id="NP_001273528.1">
    <property type="nucleotide sequence ID" value="NM_001286599.1"/>
</dbReference>
<dbReference type="RefSeq" id="NP_001273529.1">
    <property type="nucleotide sequence ID" value="NM_001286600.1"/>
</dbReference>
<dbReference type="RefSeq" id="NP_001273530.1">
    <property type="nucleotide sequence ID" value="NM_001286601.1"/>
</dbReference>
<dbReference type="RefSeq" id="NP_001273531.1">
    <property type="nucleotide sequence ID" value="NM_001286602.1"/>
</dbReference>
<dbReference type="RefSeq" id="NP_001273532.1">
    <molecule id="Q8BRT1-6"/>
    <property type="nucleotide sequence ID" value="NM_001286603.1"/>
</dbReference>
<dbReference type="PDB" id="3WOZ">
    <property type="method" value="X-ray"/>
    <property type="resolution" value="2.20 A"/>
    <property type="chains" value="A/B/C/D=642-873"/>
</dbReference>
<dbReference type="PDBsum" id="3WOZ"/>
<dbReference type="SMR" id="Q8BRT1"/>
<dbReference type="BioGRID" id="218155">
    <property type="interactions" value="29"/>
</dbReference>
<dbReference type="FunCoup" id="Q8BRT1">
    <property type="interactions" value="2718"/>
</dbReference>
<dbReference type="IntAct" id="Q8BRT1">
    <property type="interactions" value="7"/>
</dbReference>
<dbReference type="MINT" id="Q8BRT1"/>
<dbReference type="STRING" id="10090.ENSMUSP00000130201"/>
<dbReference type="GlyGen" id="Q8BRT1">
    <property type="glycosylation" value="6 sites, 2 N-linked glycans (2 sites), 1 O-linked glycan (4 sites)"/>
</dbReference>
<dbReference type="iPTMnet" id="Q8BRT1"/>
<dbReference type="PhosphoSitePlus" id="Q8BRT1"/>
<dbReference type="SwissPalm" id="Q8BRT1"/>
<dbReference type="jPOST" id="Q8BRT1"/>
<dbReference type="PaxDb" id="10090-ENSMUSP00000128460"/>
<dbReference type="PeptideAtlas" id="Q8BRT1"/>
<dbReference type="ProteomicsDB" id="283517">
    <molecule id="Q8BRT1-1"/>
</dbReference>
<dbReference type="ProteomicsDB" id="283518">
    <molecule id="Q8BRT1-5"/>
</dbReference>
<dbReference type="ProteomicsDB" id="283519">
    <molecule id="Q8BRT1-6"/>
</dbReference>
<dbReference type="Pumba" id="Q8BRT1"/>
<dbReference type="DNASU" id="76499"/>
<dbReference type="GeneID" id="76499"/>
<dbReference type="KEGG" id="mmu:76499"/>
<dbReference type="UCSC" id="uc009rwt.2">
    <molecule id="Q8BRT1-6"/>
    <property type="organism name" value="mouse"/>
</dbReference>
<dbReference type="AGR" id="MGI:1923749"/>
<dbReference type="CTD" id="23122"/>
<dbReference type="MGI" id="MGI:1923749">
    <property type="gene designation" value="Clasp2"/>
</dbReference>
<dbReference type="eggNOG" id="KOG2956">
    <property type="taxonomic scope" value="Eukaryota"/>
</dbReference>
<dbReference type="InParanoid" id="Q8BRT1"/>
<dbReference type="PhylomeDB" id="Q8BRT1"/>
<dbReference type="Reactome" id="R-MMU-141444">
    <property type="pathway name" value="Amplification of signal from unattached kinetochores via a MAD2 inhibitory signal"/>
</dbReference>
<dbReference type="Reactome" id="R-MMU-2467813">
    <property type="pathway name" value="Separation of Sister Chromatids"/>
</dbReference>
<dbReference type="Reactome" id="R-MMU-2500257">
    <property type="pathway name" value="Resolution of Sister Chromatid Cohesion"/>
</dbReference>
<dbReference type="Reactome" id="R-MMU-5663220">
    <property type="pathway name" value="RHO GTPases Activate Formins"/>
</dbReference>
<dbReference type="Reactome" id="R-MMU-68877">
    <property type="pathway name" value="Mitotic Prometaphase"/>
</dbReference>
<dbReference type="Reactome" id="R-MMU-9648025">
    <property type="pathway name" value="EML4 and NUDC in mitotic spindle formation"/>
</dbReference>
<dbReference type="BioGRID-ORCS" id="76499">
    <property type="hits" value="9 hits in 75 CRISPR screens"/>
</dbReference>
<dbReference type="CD-CODE" id="CE726F99">
    <property type="entry name" value="Postsynaptic density"/>
</dbReference>
<dbReference type="ChiTaRS" id="Clasp2">
    <property type="organism name" value="mouse"/>
</dbReference>
<dbReference type="EvolutionaryTrace" id="Q8BRT1"/>
<dbReference type="PRO" id="PR:Q8BRT1"/>
<dbReference type="Proteomes" id="UP000000589">
    <property type="component" value="Unplaced"/>
</dbReference>
<dbReference type="RNAct" id="Q8BRT1">
    <property type="molecule type" value="protein"/>
</dbReference>
<dbReference type="GO" id="GO:0005938">
    <property type="term" value="C:cell cortex"/>
    <property type="evidence" value="ECO:0000266"/>
    <property type="project" value="MGI"/>
</dbReference>
<dbReference type="GO" id="GO:0031252">
    <property type="term" value="C:cell leading edge"/>
    <property type="evidence" value="ECO:0000314"/>
    <property type="project" value="MGI"/>
</dbReference>
<dbReference type="GO" id="GO:0005813">
    <property type="term" value="C:centrosome"/>
    <property type="evidence" value="ECO:0007669"/>
    <property type="project" value="UniProtKB-SubCell"/>
</dbReference>
<dbReference type="GO" id="GO:0005794">
    <property type="term" value="C:Golgi apparatus"/>
    <property type="evidence" value="ECO:0000314"/>
    <property type="project" value="MGI"/>
</dbReference>
<dbReference type="GO" id="GO:0000776">
    <property type="term" value="C:kinetochore"/>
    <property type="evidence" value="ECO:0007669"/>
    <property type="project" value="UniProtKB-KW"/>
</dbReference>
<dbReference type="GO" id="GO:0005874">
    <property type="term" value="C:microtubule"/>
    <property type="evidence" value="ECO:0000314"/>
    <property type="project" value="UniProtKB"/>
</dbReference>
<dbReference type="GO" id="GO:0015630">
    <property type="term" value="C:microtubule cytoskeleton"/>
    <property type="evidence" value="ECO:0000314"/>
    <property type="project" value="MGI"/>
</dbReference>
<dbReference type="GO" id="GO:0005886">
    <property type="term" value="C:plasma membrane"/>
    <property type="evidence" value="ECO:0000250"/>
    <property type="project" value="UniProtKB"/>
</dbReference>
<dbReference type="GO" id="GO:0032587">
    <property type="term" value="C:ruffle membrane"/>
    <property type="evidence" value="ECO:0000250"/>
    <property type="project" value="UniProtKB"/>
</dbReference>
<dbReference type="GO" id="GO:0000922">
    <property type="term" value="C:spindle pole"/>
    <property type="evidence" value="ECO:0007669"/>
    <property type="project" value="UniProtKB-SubCell"/>
</dbReference>
<dbReference type="GO" id="GO:0005802">
    <property type="term" value="C:trans-Golgi network"/>
    <property type="evidence" value="ECO:0000250"/>
    <property type="project" value="UniProtKB"/>
</dbReference>
<dbReference type="GO" id="GO:0008017">
    <property type="term" value="F:microtubule binding"/>
    <property type="evidence" value="ECO:0000314"/>
    <property type="project" value="MGI"/>
</dbReference>
<dbReference type="GO" id="GO:0051010">
    <property type="term" value="F:microtubule plus-end binding"/>
    <property type="evidence" value="ECO:0000250"/>
    <property type="project" value="UniProtKB"/>
</dbReference>
<dbReference type="GO" id="GO:0051301">
    <property type="term" value="P:cell division"/>
    <property type="evidence" value="ECO:0007669"/>
    <property type="project" value="UniProtKB-KW"/>
</dbReference>
<dbReference type="GO" id="GO:0016477">
    <property type="term" value="P:cell migration"/>
    <property type="evidence" value="ECO:0000316"/>
    <property type="project" value="MGI"/>
</dbReference>
<dbReference type="GO" id="GO:0030010">
    <property type="term" value="P:establishment of cell polarity"/>
    <property type="evidence" value="ECO:0000316"/>
    <property type="project" value="MGI"/>
</dbReference>
<dbReference type="GO" id="GO:0007163">
    <property type="term" value="P:establishment or maintenance of cell polarity"/>
    <property type="evidence" value="ECO:0000315"/>
    <property type="project" value="MGI"/>
</dbReference>
<dbReference type="GO" id="GO:0010458">
    <property type="term" value="P:exit from mitosis"/>
    <property type="evidence" value="ECO:0000250"/>
    <property type="project" value="UniProtKB"/>
</dbReference>
<dbReference type="GO" id="GO:0010761">
    <property type="term" value="P:fibroblast migration"/>
    <property type="evidence" value="ECO:0000315"/>
    <property type="project" value="MGI"/>
</dbReference>
<dbReference type="GO" id="GO:0007030">
    <property type="term" value="P:Golgi organization"/>
    <property type="evidence" value="ECO:0000250"/>
    <property type="project" value="UniProtKB"/>
</dbReference>
<dbReference type="GO" id="GO:0051321">
    <property type="term" value="P:meiotic cell cycle"/>
    <property type="evidence" value="ECO:0007669"/>
    <property type="project" value="UniProtKB-KW"/>
</dbReference>
<dbReference type="GO" id="GO:0034453">
    <property type="term" value="P:microtubule anchoring"/>
    <property type="evidence" value="ECO:0000250"/>
    <property type="project" value="UniProtKB"/>
</dbReference>
<dbReference type="GO" id="GO:0000226">
    <property type="term" value="P:microtubule cytoskeleton organization"/>
    <property type="evidence" value="ECO:0000250"/>
    <property type="project" value="UniProtKB"/>
</dbReference>
<dbReference type="GO" id="GO:0007019">
    <property type="term" value="P:microtubule depolymerization"/>
    <property type="evidence" value="ECO:0000315"/>
    <property type="project" value="MGI"/>
</dbReference>
<dbReference type="GO" id="GO:0007020">
    <property type="term" value="P:microtubule nucleation"/>
    <property type="evidence" value="ECO:0000250"/>
    <property type="project" value="UniProtKB"/>
</dbReference>
<dbReference type="GO" id="GO:0031023">
    <property type="term" value="P:microtubule organizing center organization"/>
    <property type="evidence" value="ECO:0000250"/>
    <property type="project" value="UniProtKB"/>
</dbReference>
<dbReference type="GO" id="GO:0007052">
    <property type="term" value="P:mitotic spindle organization"/>
    <property type="evidence" value="ECO:0000250"/>
    <property type="project" value="UniProtKB"/>
</dbReference>
<dbReference type="GO" id="GO:0007026">
    <property type="term" value="P:negative regulation of microtubule depolymerization"/>
    <property type="evidence" value="ECO:0000314"/>
    <property type="project" value="MGI"/>
</dbReference>
<dbReference type="GO" id="GO:0032886">
    <property type="term" value="P:regulation of microtubule-based process"/>
    <property type="evidence" value="ECO:0000250"/>
    <property type="project" value="UniProtKB"/>
</dbReference>
<dbReference type="FunFam" id="1.25.10.10:FF:000001">
    <property type="entry name" value="CLIP-associating protein 1 isoform 2"/>
    <property type="match status" value="1"/>
</dbReference>
<dbReference type="FunFam" id="1.25.10.10:FF:000005">
    <property type="entry name" value="CLIP-associating protein 1 isoform 2"/>
    <property type="match status" value="1"/>
</dbReference>
<dbReference type="FunFam" id="1.25.10.10:FF:000006">
    <property type="entry name" value="CLIP-associating protein 1 isoform 2"/>
    <property type="match status" value="1"/>
</dbReference>
<dbReference type="Gene3D" id="1.25.10.10">
    <property type="entry name" value="Leucine-rich Repeat Variant"/>
    <property type="match status" value="3"/>
</dbReference>
<dbReference type="InterPro" id="IPR011989">
    <property type="entry name" value="ARM-like"/>
</dbReference>
<dbReference type="InterPro" id="IPR016024">
    <property type="entry name" value="ARM-type_fold"/>
</dbReference>
<dbReference type="InterPro" id="IPR024395">
    <property type="entry name" value="CLASP_N_dom"/>
</dbReference>
<dbReference type="InterPro" id="IPR034085">
    <property type="entry name" value="TOG"/>
</dbReference>
<dbReference type="PANTHER" id="PTHR21567">
    <property type="entry name" value="CLASP"/>
    <property type="match status" value="1"/>
</dbReference>
<dbReference type="PANTHER" id="PTHR21567:SF30">
    <property type="entry name" value="CLIP-ASSOCIATING PROTEIN 2"/>
    <property type="match status" value="1"/>
</dbReference>
<dbReference type="Pfam" id="PF21040">
    <property type="entry name" value="CEP104-like_TOG"/>
    <property type="match status" value="1"/>
</dbReference>
<dbReference type="Pfam" id="PF12348">
    <property type="entry name" value="CLASP_N"/>
    <property type="match status" value="1"/>
</dbReference>
<dbReference type="SMART" id="SM01349">
    <property type="entry name" value="TOG"/>
    <property type="match status" value="3"/>
</dbReference>
<dbReference type="SUPFAM" id="SSF48371">
    <property type="entry name" value="ARM repeat"/>
    <property type="match status" value="2"/>
</dbReference>
<keyword id="KW-0002">3D-structure</keyword>
<keyword id="KW-0025">Alternative splicing</keyword>
<keyword id="KW-0131">Cell cycle</keyword>
<keyword id="KW-0132">Cell division</keyword>
<keyword id="KW-1003">Cell membrane</keyword>
<keyword id="KW-0966">Cell projection</keyword>
<keyword id="KW-0137">Centromere</keyword>
<keyword id="KW-0158">Chromosome</keyword>
<keyword id="KW-0963">Cytoplasm</keyword>
<keyword id="KW-0206">Cytoskeleton</keyword>
<keyword id="KW-0333">Golgi apparatus</keyword>
<keyword id="KW-0995">Kinetochore</keyword>
<keyword id="KW-0469">Meiosis</keyword>
<keyword id="KW-0472">Membrane</keyword>
<keyword id="KW-0493">Microtubule</keyword>
<keyword id="KW-0498">Mitosis</keyword>
<keyword id="KW-0597">Phosphoprotein</keyword>
<keyword id="KW-1185">Reference proteome</keyword>
<keyword id="KW-0677">Repeat</keyword>
<gene>
    <name type="primary">Clasp2</name>
    <name type="synonym">Kiaa0627</name>
</gene>
<evidence type="ECO:0000250" key="1"/>
<evidence type="ECO:0000250" key="2">
    <source>
        <dbReference type="UniProtKB" id="O75122"/>
    </source>
</evidence>
<evidence type="ECO:0000250" key="3">
    <source>
        <dbReference type="UniProtKB" id="Q99JD4"/>
    </source>
</evidence>
<evidence type="ECO:0000255" key="4"/>
<evidence type="ECO:0000256" key="5">
    <source>
        <dbReference type="SAM" id="MobiDB-lite"/>
    </source>
</evidence>
<evidence type="ECO:0000269" key="6">
    <source>
    </source>
</evidence>
<evidence type="ECO:0000269" key="7">
    <source>
    </source>
</evidence>
<evidence type="ECO:0000269" key="8">
    <source>
    </source>
</evidence>
<evidence type="ECO:0000269" key="9">
    <source>
    </source>
</evidence>
<evidence type="ECO:0000269" key="10">
    <source>
    </source>
</evidence>
<evidence type="ECO:0000269" key="11">
    <source>
    </source>
</evidence>
<evidence type="ECO:0000303" key="12">
    <source>
    </source>
</evidence>
<evidence type="ECO:0000303" key="13">
    <source>
    </source>
</evidence>
<evidence type="ECO:0000303" key="14">
    <source>
    </source>
</evidence>
<evidence type="ECO:0000305" key="15"/>
<evidence type="ECO:0007744" key="16">
    <source>
    </source>
</evidence>
<evidence type="ECO:0007829" key="17">
    <source>
        <dbReference type="PDB" id="3WOZ"/>
    </source>
</evidence>
<feature type="chain" id="PRO_0000089850" description="CLIP-associating protein 2">
    <location>
        <begin position="1"/>
        <end position="1286"/>
    </location>
</feature>
<feature type="repeat" description="HEAT 1" evidence="4">
    <location>
        <begin position="179"/>
        <end position="214"/>
    </location>
</feature>
<feature type="repeat" description="HEAT 2" evidence="4">
    <location>
        <begin position="215"/>
        <end position="251"/>
    </location>
</feature>
<feature type="repeat" description="HEAT 3" evidence="4">
    <location>
        <begin position="256"/>
        <end position="293"/>
    </location>
</feature>
<feature type="repeat" description="HEAT 4" evidence="4">
    <location>
        <begin position="702"/>
        <end position="739"/>
    </location>
</feature>
<feature type="repeat" description="HEAT 5" evidence="4">
    <location>
        <begin position="764"/>
        <end position="801"/>
    </location>
</feature>
<feature type="repeat" description="HEAT 6" evidence="4">
    <location>
        <begin position="1046"/>
        <end position="1083"/>
    </location>
</feature>
<feature type="repeat" description="HEAT 7" evidence="4">
    <location>
        <begin position="1090"/>
        <end position="1127"/>
    </location>
</feature>
<feature type="repeat" description="HEAT 8" evidence="4">
    <location>
        <begin position="1208"/>
        <end position="1245"/>
    </location>
</feature>
<feature type="region of interest" description="Golgi localization">
    <location>
        <begin position="1"/>
        <end position="40"/>
    </location>
</feature>
<feature type="region of interest" description="Disordered" evidence="5">
    <location>
        <begin position="17"/>
        <end position="67"/>
    </location>
</feature>
<feature type="region of interest" description="TOG 1" evidence="2">
    <location>
        <begin position="66"/>
        <end position="317"/>
    </location>
</feature>
<feature type="region of interest" description="Disordered" evidence="5">
    <location>
        <begin position="320"/>
        <end position="374"/>
    </location>
</feature>
<feature type="region of interest" description="Disordered" evidence="5">
    <location>
        <begin position="411"/>
        <end position="473"/>
    </location>
</feature>
<feature type="region of interest" description="Interaction with microtubules, MAPRE1 and MAPRE3" evidence="1">
    <location>
        <begin position="450"/>
        <end position="565"/>
    </location>
</feature>
<feature type="region of interest" description="Disordered" evidence="5">
    <location>
        <begin position="493"/>
        <end position="564"/>
    </location>
</feature>
<feature type="region of interest" description="Disordered" evidence="5">
    <location>
        <begin position="605"/>
        <end position="638"/>
    </location>
</feature>
<feature type="region of interest" description="TOG 2" evidence="2">
    <location>
        <begin position="642"/>
        <end position="873"/>
    </location>
</feature>
<feature type="region of interest" description="Interaction with RSN and localization to the Golgi and kinetochores" evidence="1">
    <location>
        <begin position="864"/>
        <end position="1286"/>
    </location>
</feature>
<feature type="region of interest" description="Disordered" evidence="5">
    <location>
        <begin position="870"/>
        <end position="920"/>
    </location>
</feature>
<feature type="region of interest" description="Disordered" evidence="5">
    <location>
        <begin position="944"/>
        <end position="989"/>
    </location>
</feature>
<feature type="region of interest" description="Required for cortical localization" evidence="1">
    <location>
        <begin position="1009"/>
        <end position="1286"/>
    </location>
</feature>
<feature type="short sequence motif" description="SXIP motif 1; mediates interaction with MAPRE1 and targeting to microtubule plus ends" evidence="2">
    <location>
        <begin position="500"/>
        <end position="503"/>
    </location>
</feature>
<feature type="short sequence motif" description="SXIP motif 2; mediates interaction with MAPRE1 and targeting to microtubule plus ends" evidence="2">
    <location>
        <begin position="523"/>
        <end position="526"/>
    </location>
</feature>
<feature type="compositionally biased region" description="Gly residues" evidence="5">
    <location>
        <begin position="53"/>
        <end position="67"/>
    </location>
</feature>
<feature type="compositionally biased region" description="Low complexity" evidence="5">
    <location>
        <begin position="322"/>
        <end position="340"/>
    </location>
</feature>
<feature type="compositionally biased region" description="Polar residues" evidence="5">
    <location>
        <begin position="341"/>
        <end position="352"/>
    </location>
</feature>
<feature type="compositionally biased region" description="Basic and acidic residues" evidence="5">
    <location>
        <begin position="417"/>
        <end position="431"/>
    </location>
</feature>
<feature type="compositionally biased region" description="Low complexity" evidence="5">
    <location>
        <begin position="459"/>
        <end position="473"/>
    </location>
</feature>
<feature type="compositionally biased region" description="Basic and acidic residues" evidence="5">
    <location>
        <begin position="605"/>
        <end position="616"/>
    </location>
</feature>
<feature type="compositionally biased region" description="Low complexity" evidence="5">
    <location>
        <begin position="620"/>
        <end position="634"/>
    </location>
</feature>
<feature type="compositionally biased region" description="Polar residues" evidence="5">
    <location>
        <begin position="872"/>
        <end position="884"/>
    </location>
</feature>
<feature type="compositionally biased region" description="Polar residues" evidence="5">
    <location>
        <begin position="893"/>
        <end position="914"/>
    </location>
</feature>
<feature type="compositionally biased region" description="Basic and acidic residues" evidence="5">
    <location>
        <begin position="947"/>
        <end position="964"/>
    </location>
</feature>
<feature type="modified residue" description="Phosphoserine" evidence="16">
    <location>
        <position position="14"/>
    </location>
</feature>
<feature type="modified residue" description="Phosphoserine" evidence="3">
    <location>
        <position position="20"/>
    </location>
</feature>
<feature type="modified residue" description="Phosphoserine" evidence="2">
    <location>
        <position position="322"/>
    </location>
</feature>
<feature type="modified residue" description="Phosphoserine" evidence="2">
    <location>
        <position position="333"/>
    </location>
</feature>
<feature type="modified residue" description="Phosphoserine" evidence="2">
    <location>
        <position position="336"/>
    </location>
</feature>
<feature type="modified residue" description="Phosphoserine" evidence="16">
    <location>
        <position position="374"/>
    </location>
</feature>
<feature type="modified residue" description="Phosphoserine" evidence="16">
    <location>
        <position position="376"/>
    </location>
</feature>
<feature type="modified residue" description="Phosphoserine" evidence="3">
    <location>
        <position position="413"/>
    </location>
</feature>
<feature type="modified residue" description="Phosphoserine" evidence="2">
    <location>
        <position position="461"/>
    </location>
</feature>
<feature type="modified residue" description="Phosphoserine" evidence="2">
    <location>
        <position position="465"/>
    </location>
</feature>
<feature type="modified residue" description="Phosphoserine" evidence="2">
    <location>
        <position position="469"/>
    </location>
</feature>
<feature type="modified residue" description="Phosphoserine" evidence="2">
    <location>
        <position position="484"/>
    </location>
</feature>
<feature type="modified residue" description="Phosphoserine" evidence="2">
    <location>
        <position position="495"/>
    </location>
</feature>
<feature type="modified residue" description="Phosphoserine" evidence="2">
    <location>
        <position position="513"/>
    </location>
</feature>
<feature type="modified residue" description="Phosphoserine" evidence="2">
    <location>
        <position position="531"/>
    </location>
</feature>
<feature type="modified residue" description="Phosphoserine" evidence="2">
    <location>
        <position position="535"/>
    </location>
</feature>
<feature type="modified residue" description="Phosphoserine" evidence="2">
    <location>
        <position position="570"/>
    </location>
</feature>
<feature type="modified residue" description="Phosphoserine" evidence="2">
    <location>
        <position position="572"/>
    </location>
</feature>
<feature type="modified residue" description="Phosphoserine" evidence="2">
    <location>
        <position position="581"/>
    </location>
</feature>
<feature type="modified residue" description="Phosphoserine" evidence="2">
    <location>
        <position position="614"/>
    </location>
</feature>
<feature type="modified residue" description="Phosphoserine" evidence="16">
    <location>
        <position position="620"/>
    </location>
</feature>
<feature type="modified residue" description="Phosphothreonine" evidence="2">
    <location>
        <position position="779"/>
    </location>
</feature>
<feature type="modified residue" description="Phosphoserine" evidence="2">
    <location>
        <position position="884"/>
    </location>
</feature>
<feature type="modified residue" description="Phosphoserine" evidence="2">
    <location>
        <position position="944"/>
    </location>
</feature>
<feature type="modified residue" description="Phosphoserine" evidence="16">
    <location>
        <position position="947"/>
    </location>
</feature>
<feature type="modified residue" description="Phosphoserine" evidence="2">
    <location>
        <position position="1005"/>
    </location>
</feature>
<feature type="modified residue" description="Phosphoserine" evidence="2">
    <location>
        <position position="1021"/>
    </location>
</feature>
<feature type="splice variant" id="VSP_015808" description="In isoform 2." evidence="12">
    <original>MRRLICKRICDY</original>
    <variation>MEPRGAEYFCAQVLQKDVSGRLQAGEELLLCLGTPGAIPDLEDDPSRLAKTVDALTRWVGSSNYRVSLLGLEILSAFVDRLSTRFKSYVTMVTTALIDRMGDVKDKVREEAQNLTLKLMDEVAPPMYIWEQLASGFKHKNFRSREGVCLCLIETLNIFGTQPLVISKLVPHLCVLFGDSNSQVRNAALSAVVEIYRHVGEKLRIDLCKRDIPPARLEMVLAKFDEVQNSGGMILSVCKD</variation>
    <location>
        <begin position="1"/>
        <end position="12"/>
    </location>
</feature>
<feature type="splice variant" id="VSP_015809" description="In isoform 3." evidence="13 14">
    <original>MRRLICKRICDY</original>
    <variation>MAMGDD</variation>
    <location>
        <begin position="1"/>
        <end position="12"/>
    </location>
</feature>
<feature type="splice variant" id="VSP_015810" description="In isoform 3." evidence="13 14">
    <original>LKKIRSLLVAGAAQYDCFFQHLRLLDGALKLSAKDLRSQVVREACITVAHLSTVL</original>
    <variation>CMSCSLVASEVERALAWPLWSHLATYQHHCHCTLSHEDLPEKRLTSPVSSAFVQH</variation>
    <location>
        <begin position="119"/>
        <end position="173"/>
    </location>
</feature>
<feature type="splice variant" id="VSP_015811" description="In isoform 2." evidence="12">
    <location>
        <begin position="142"/>
        <end position="1054"/>
    </location>
</feature>
<feature type="splice variant" id="VSP_015812" description="In isoform 3." evidence="13 14">
    <location>
        <begin position="174"/>
        <end position="1286"/>
    </location>
</feature>
<feature type="mutagenesis site" description="Impairs Golgi localization; when associated with S-10." evidence="6">
    <original>C</original>
    <variation>S</variation>
    <location>
        <position position="6"/>
    </location>
</feature>
<feature type="mutagenesis site" description="Impairs Golgi localization; when associated with S-6." evidence="6">
    <original>C</original>
    <variation>S</variation>
    <location>
        <position position="10"/>
    </location>
</feature>
<feature type="sequence conflict" description="In Ref. 4; BAC41436." evidence="15" ref="4">
    <original>S</original>
    <variation>T</variation>
    <location>
        <position position="657"/>
    </location>
</feature>
<feature type="sequence conflict" description="In Ref. 4; BAC41436." evidence="15" ref="4">
    <original>I</original>
    <variation>V</variation>
    <location>
        <position position="683"/>
    </location>
</feature>
<feature type="sequence conflict" description="In Ref. 4; BAC41436." evidence="15" ref="4">
    <original>P</original>
    <variation>L</variation>
    <location>
        <position position="699"/>
    </location>
</feature>
<feature type="sequence conflict" description="In Ref. 4; BAC41436." evidence="15" ref="4">
    <original>K</original>
    <variation>KR</variation>
    <location>
        <position position="702"/>
    </location>
</feature>
<feature type="helix" evidence="17">
    <location>
        <begin position="648"/>
        <end position="655"/>
    </location>
</feature>
<feature type="helix" evidence="17">
    <location>
        <begin position="660"/>
        <end position="675"/>
    </location>
</feature>
<feature type="helix" evidence="17">
    <location>
        <begin position="682"/>
        <end position="695"/>
    </location>
</feature>
<feature type="helix" evidence="17">
    <location>
        <begin position="701"/>
        <end position="718"/>
    </location>
</feature>
<feature type="helix" evidence="17">
    <location>
        <begin position="719"/>
        <end position="721"/>
    </location>
</feature>
<feature type="turn" evidence="17">
    <location>
        <begin position="723"/>
        <end position="725"/>
    </location>
</feature>
<feature type="helix" evidence="17">
    <location>
        <begin position="726"/>
        <end position="737"/>
    </location>
</feature>
<feature type="helix" evidence="17">
    <location>
        <begin position="743"/>
        <end position="759"/>
    </location>
</feature>
<feature type="helix" evidence="17">
    <location>
        <begin position="762"/>
        <end position="774"/>
    </location>
</feature>
<feature type="strand" evidence="17">
    <location>
        <begin position="776"/>
        <end position="778"/>
    </location>
</feature>
<feature type="helix" evidence="17">
    <location>
        <begin position="782"/>
        <end position="796"/>
    </location>
</feature>
<feature type="helix" evidence="17">
    <location>
        <begin position="801"/>
        <end position="803"/>
    </location>
</feature>
<feature type="helix" evidence="17">
    <location>
        <begin position="808"/>
        <end position="820"/>
    </location>
</feature>
<feature type="helix" evidence="17">
    <location>
        <begin position="827"/>
        <end position="843"/>
    </location>
</feature>
<feature type="helix" evidence="17">
    <location>
        <begin position="845"/>
        <end position="853"/>
    </location>
</feature>
<feature type="helix" evidence="17">
    <location>
        <begin position="857"/>
        <end position="867"/>
    </location>
</feature>
<sequence length="1286" mass="140739">MRRLICKRICDYKSFDDEESVDGNRPSSAASAFKVPAPKTPGNPVSSARKPGSAGGPKVGGPSKEGGAGAVDEDDFIKAFTDVPSVQIYSSRELEETLNKIREILSDDKHDWDQRANALKKIRSLLVAGAAQYDCFFQHLRLLDGALKLSAKDLRSQVVREACITVAHLSTVLGNKFDHGAEAIVPTLFNLVPNSAKVMATSGCAAIRFIIRHTHVPRLIPLITSNCTSKSVPVRRRSFEFLDLLLQEWQTHSLERHAAVLVETIKKGIHDADAEARVEARKTYMGLRNHFPGEAETLYNSLEPSYQKSLQTYLKSSGSVASLPQSDRSSSSSQESLNRPFSSKWSTANPSTVAGRVSVGGSKANPLPGSLQRSRSDIDVNAAAGAKAHHAAGQAVRSGRLGAGALNPGSYASLEDTSDKMDGTASDDGRVRAKLSTPLVAVGNAKTDSRGRSRTKMVSQSQPGSRSGSPGRVLTTTALSTVSSGAQRVLVNSASAQKRSKIPRSQGCSREASPSRLSVARSSRIPRPSVSQGCSREASRESSRDTSPVRSFQPLGPGYGISQSSRLSSSVSAMRVLNTGSDVEEAVADALLLGDIRTKKKPARRRYESYGMHSDDDANSDASSACSERSYSSRNGSIPTYMRQTEDVAEVLNRCASSNWSERKEGLLGLQNLLKNQRTLSRIELKRLCEIFTRMFADPHGKVFSMFLETLVDFIQVHKDDLQDWLFVLLTQLLKKMGADLLGSVQAKVQKALDITRESFPNDLQFNILMRFTVDQTQTPSLKVKVAILKYIETLAKQMDPRDFTNSSETRLAVSRVITWTTEPKSSDVRKAAQSVLISLFELNTPEFTMLLGALPKTFQDGATKLLHNHLRNTGNGTQSSMGSPLTRPTPRSPANWSSPLTSPTNTSQNTLSPSAFDYDTENMNSEDIYSSLRGVTEAIQNFSFRSQEDMSEPVRRDPKKEDGDTICSGPGMSDPRAGGDAADGSQPALDNKASLLHSMPLHSSPRSRDYNPYNYSDSISPFNKSALKEAMFDDDADQFPDDLSLDHSDLVAELLKELSNHNERIEERKIALYELMKLTQEESFSVWDEHFKTILLLLLETLGDKEPTIRALALKVLKEILRHQPARFKNYAELTVMKTLEAHKDPHKEVVRSAEEAASVLATSISPEQCIKVLCPIIQTADYPINLAAIKMQTKVIERVSKETLNMLLPEIMPGLIQGYDNSESSVRKACVFCLVAVHAVIGDELKPHLSQLTGSKMKLLNLYIKRAQTGSAGADPTADVSGQS</sequence>
<comment type="function">
    <text evidence="2 8">Microtubule plus-end tracking protein that promotes the stabilization of dynamic microtubules. Involved in the nucleation of noncentrosomal microtubules originating from the trans-Golgi network (TGN). Required for the polarization of the cytoplasmic microtubule arrays in migrating cells towards the leading edge of the cell. May act at the cell cortex to enhance the frequency of rescue of depolymerizing microtubules by attaching their plus-ends to cortical platforms composed of ERC1 and PHLDB2. This cortical microtubule stabilizing activity is regulated at least in part by phosphatidylinositol 3-kinase signaling. Also performs a similar stabilizing function at the kinetochore which is essential for the bipolar alignment of chromosomes on the mitotic spindle. Acts as a mediator of ERBB2-dependent stabilization of microtubules at the cell cortex.</text>
</comment>
<comment type="subunit">
    <text evidence="2 6 9 11">Interacts with microtubules (PubMed:11290329). Interacts with MAPRE1; probably required for targeting to growing microtubule plus ends. Interacts with ERC1, MAPRE3 and PHLDB2. The interaction with ERC1 may be mediated by PHLDB2. Interacts with GCC2; recruits CLASP2 to Golgi membranes (By similarity). Interacts with CLIP2 and RSN (PubMed:11290329). Interacts with MACF1 (PubMed:18854161). Interacts with mtcl2 (PubMed:28550165). Interacts with MTCL1 (By similarity).</text>
</comment>
<comment type="subcellular location">
    <subcellularLocation>
        <location evidence="6 11">Cytoplasm</location>
        <location evidence="6 11">Cytoskeleton</location>
    </subcellularLocation>
    <subcellularLocation>
        <location>Cytoplasm</location>
        <location>Cytoskeleton</location>
        <location>Microtubule organizing center</location>
        <location>Centrosome</location>
    </subcellularLocation>
    <subcellularLocation>
        <location>Chromosome</location>
        <location>Centromere</location>
        <location>Kinetochore</location>
    </subcellularLocation>
    <subcellularLocation>
        <location>Cytoplasm</location>
        <location>Cytoskeleton</location>
        <location>Spindle</location>
    </subcellularLocation>
    <subcellularLocation>
        <location>Cytoplasm</location>
        <location>Cytoskeleton</location>
        <location>Spindle pole</location>
    </subcellularLocation>
    <subcellularLocation>
        <location evidence="6">Golgi apparatus</location>
    </subcellularLocation>
    <subcellularLocation>
        <location evidence="2">Golgi apparatus</location>
        <location evidence="2">trans-Golgi network</location>
    </subcellularLocation>
    <subcellularLocation>
        <location evidence="2">Cell membrane</location>
    </subcellularLocation>
    <subcellularLocation>
        <location evidence="2">Cell projection</location>
        <location evidence="2">Ruffle membrane</location>
    </subcellularLocation>
    <subcellularLocation>
        <location evidence="2">Cytoplasm</location>
        <location evidence="2">Cell cortex</location>
    </subcellularLocation>
    <text evidence="2 6">Localizes to microtubule plus ends (PubMed:11290329). Localizes to centrosomes, kinetochores and the mitotic spindle from prometaphase. Subsequently localizes to the spindle midzone from anaphase and to the midbody from telophase. In migrating cells localizes to the plus ends of microtubules within the cell body and to the entire microtubule lattice within the lamella. Localizes to the cell cortex and this requires ERC1 and PHLDB2 (By similarity). Colocalizes with KANK1 at the cell cortex, likely recruited in cortical microtubule stabilization complexes (CMSC) at focal adhesions rims (By similarity). Also localizes to meiotic spindle poles. The MEMO1-RHOA-DIAPH1 signaling pathway controls localization of the phosphorylated form to the cell membrane (By similarity).</text>
</comment>
<comment type="alternative products">
    <event type="alternative splicing"/>
    <isoform>
        <id>Q8BRT1-1</id>
        <name>1</name>
        <sequence type="displayed"/>
    </isoform>
    <isoform>
        <id>Q8BRT1-5</id>
        <name>2</name>
        <sequence type="described" ref="VSP_015808 VSP_015811"/>
    </isoform>
    <isoform>
        <id>Q8BRT1-6</id>
        <name>3</name>
        <sequence type="described" ref="VSP_015809 VSP_015810 VSP_015812"/>
    </isoform>
</comment>
<comment type="tissue specificity">
    <text evidence="6">Highly expressed in brain and at low levels in heart, kidney and lung.</text>
</comment>
<comment type="developmental stage">
    <text evidence="7">Expressed in oocytes and early embryos.</text>
</comment>
<comment type="domain">
    <text evidence="2">The two SXIP sequence motifs mediate interaction with MAPRE1; this is necessary for targeting to growing microtubule plus ends.</text>
</comment>
<comment type="domain">
    <text evidence="2 10">Two TOG regions display structural characteristics similar to HEAT repeat domains and mediate interaction with microtubules.</text>
</comment>
<comment type="PTM">
    <text>Phosphorylated by GSK3B. Phosphorylation by GSK3B may negatively regulate binding to microtubule lattices in lamella. Isoform 2 is phosphorylated on Ser-241.</text>
</comment>
<comment type="similarity">
    <text evidence="15">Belongs to the CLASP family.</text>
</comment>
<comment type="sequence caution" evidence="15">
    <conflict type="frameshift">
        <sequence resource="EMBL-CDS" id="BAC41436"/>
    </conflict>
</comment>
<protein>
    <recommendedName>
        <fullName>CLIP-associating protein 2</fullName>
    </recommendedName>
    <alternativeName>
        <fullName>Cytoplasmic linker-associated protein 2</fullName>
    </alternativeName>
</protein>
<organism>
    <name type="scientific">Mus musculus</name>
    <name type="common">Mouse</name>
    <dbReference type="NCBI Taxonomy" id="10090"/>
    <lineage>
        <taxon>Eukaryota</taxon>
        <taxon>Metazoa</taxon>
        <taxon>Chordata</taxon>
        <taxon>Craniata</taxon>
        <taxon>Vertebrata</taxon>
        <taxon>Euteleostomi</taxon>
        <taxon>Mammalia</taxon>
        <taxon>Eutheria</taxon>
        <taxon>Euarchontoglires</taxon>
        <taxon>Glires</taxon>
        <taxon>Rodentia</taxon>
        <taxon>Myomorpha</taxon>
        <taxon>Muroidea</taxon>
        <taxon>Muridae</taxon>
        <taxon>Murinae</taxon>
        <taxon>Mus</taxon>
        <taxon>Mus</taxon>
    </lineage>
</organism>
<proteinExistence type="evidence at protein level"/>
<reference key="1">
    <citation type="journal article" date="2001" name="Cell">
        <title>Clasps are CLIP-115 and -170 associating proteins involved in the regional regulation of microtubule dynamics in motile fibroblasts.</title>
        <authorList>
            <person name="Akhmanova A."/>
            <person name="Hoogenraad C.C."/>
            <person name="Drabek K."/>
            <person name="Stepanova T."/>
            <person name="Dortland B."/>
            <person name="Verkerk T."/>
            <person name="Vermeulen W."/>
            <person name="Burgering B.M."/>
            <person name="de Zeeuw C.I."/>
            <person name="Grosveld F."/>
            <person name="Galjart N."/>
        </authorList>
    </citation>
    <scope>NUCLEOTIDE SEQUENCE [MRNA] (ISOFORM 2)</scope>
    <scope>SUBCELLULAR LOCATION</scope>
    <scope>ALTERNATIVE SPLICING</scope>
    <scope>TISSUE SPECIFICITY</scope>
    <scope>INTERACTION WITH CLIP2 AND RSN</scope>
    <scope>MUTAGENESIS OF CYS-6 AND CYS-10</scope>
</reference>
<reference key="2">
    <citation type="journal article" date="2005" name="Science">
        <title>The transcriptional landscape of the mammalian genome.</title>
        <authorList>
            <person name="Carninci P."/>
            <person name="Kasukawa T."/>
            <person name="Katayama S."/>
            <person name="Gough J."/>
            <person name="Frith M.C."/>
            <person name="Maeda N."/>
            <person name="Oyama R."/>
            <person name="Ravasi T."/>
            <person name="Lenhard B."/>
            <person name="Wells C."/>
            <person name="Kodzius R."/>
            <person name="Shimokawa K."/>
            <person name="Bajic V.B."/>
            <person name="Brenner S.E."/>
            <person name="Batalov S."/>
            <person name="Forrest A.R."/>
            <person name="Zavolan M."/>
            <person name="Davis M.J."/>
            <person name="Wilming L.G."/>
            <person name="Aidinis V."/>
            <person name="Allen J.E."/>
            <person name="Ambesi-Impiombato A."/>
            <person name="Apweiler R."/>
            <person name="Aturaliya R.N."/>
            <person name="Bailey T.L."/>
            <person name="Bansal M."/>
            <person name="Baxter L."/>
            <person name="Beisel K.W."/>
            <person name="Bersano T."/>
            <person name="Bono H."/>
            <person name="Chalk A.M."/>
            <person name="Chiu K.P."/>
            <person name="Choudhary V."/>
            <person name="Christoffels A."/>
            <person name="Clutterbuck D.R."/>
            <person name="Crowe M.L."/>
            <person name="Dalla E."/>
            <person name="Dalrymple B.P."/>
            <person name="de Bono B."/>
            <person name="Della Gatta G."/>
            <person name="di Bernardo D."/>
            <person name="Down T."/>
            <person name="Engstrom P."/>
            <person name="Fagiolini M."/>
            <person name="Faulkner G."/>
            <person name="Fletcher C.F."/>
            <person name="Fukushima T."/>
            <person name="Furuno M."/>
            <person name="Futaki S."/>
            <person name="Gariboldi M."/>
            <person name="Georgii-Hemming P."/>
            <person name="Gingeras T.R."/>
            <person name="Gojobori T."/>
            <person name="Green R.E."/>
            <person name="Gustincich S."/>
            <person name="Harbers M."/>
            <person name="Hayashi Y."/>
            <person name="Hensch T.K."/>
            <person name="Hirokawa N."/>
            <person name="Hill D."/>
            <person name="Huminiecki L."/>
            <person name="Iacono M."/>
            <person name="Ikeo K."/>
            <person name="Iwama A."/>
            <person name="Ishikawa T."/>
            <person name="Jakt M."/>
            <person name="Kanapin A."/>
            <person name="Katoh M."/>
            <person name="Kawasawa Y."/>
            <person name="Kelso J."/>
            <person name="Kitamura H."/>
            <person name="Kitano H."/>
            <person name="Kollias G."/>
            <person name="Krishnan S.P."/>
            <person name="Kruger A."/>
            <person name="Kummerfeld S.K."/>
            <person name="Kurochkin I.V."/>
            <person name="Lareau L.F."/>
            <person name="Lazarevic D."/>
            <person name="Lipovich L."/>
            <person name="Liu J."/>
            <person name="Liuni S."/>
            <person name="McWilliam S."/>
            <person name="Madan Babu M."/>
            <person name="Madera M."/>
            <person name="Marchionni L."/>
            <person name="Matsuda H."/>
            <person name="Matsuzawa S."/>
            <person name="Miki H."/>
            <person name="Mignone F."/>
            <person name="Miyake S."/>
            <person name="Morris K."/>
            <person name="Mottagui-Tabar S."/>
            <person name="Mulder N."/>
            <person name="Nakano N."/>
            <person name="Nakauchi H."/>
            <person name="Ng P."/>
            <person name="Nilsson R."/>
            <person name="Nishiguchi S."/>
            <person name="Nishikawa S."/>
            <person name="Nori F."/>
            <person name="Ohara O."/>
            <person name="Okazaki Y."/>
            <person name="Orlando V."/>
            <person name="Pang K.C."/>
            <person name="Pavan W.J."/>
            <person name="Pavesi G."/>
            <person name="Pesole G."/>
            <person name="Petrovsky N."/>
            <person name="Piazza S."/>
            <person name="Reed J."/>
            <person name="Reid J.F."/>
            <person name="Ring B.Z."/>
            <person name="Ringwald M."/>
            <person name="Rost B."/>
            <person name="Ruan Y."/>
            <person name="Salzberg S.L."/>
            <person name="Sandelin A."/>
            <person name="Schneider C."/>
            <person name="Schoenbach C."/>
            <person name="Sekiguchi K."/>
            <person name="Semple C.A."/>
            <person name="Seno S."/>
            <person name="Sessa L."/>
            <person name="Sheng Y."/>
            <person name="Shibata Y."/>
            <person name="Shimada H."/>
            <person name="Shimada K."/>
            <person name="Silva D."/>
            <person name="Sinclair B."/>
            <person name="Sperling S."/>
            <person name="Stupka E."/>
            <person name="Sugiura K."/>
            <person name="Sultana R."/>
            <person name="Takenaka Y."/>
            <person name="Taki K."/>
            <person name="Tammoja K."/>
            <person name="Tan S.L."/>
            <person name="Tang S."/>
            <person name="Taylor M.S."/>
            <person name="Tegner J."/>
            <person name="Teichmann S.A."/>
            <person name="Ueda H.R."/>
            <person name="van Nimwegen E."/>
            <person name="Verardo R."/>
            <person name="Wei C.L."/>
            <person name="Yagi K."/>
            <person name="Yamanishi H."/>
            <person name="Zabarovsky E."/>
            <person name="Zhu S."/>
            <person name="Zimmer A."/>
            <person name="Hide W."/>
            <person name="Bult C."/>
            <person name="Grimmond S.M."/>
            <person name="Teasdale R.D."/>
            <person name="Liu E.T."/>
            <person name="Brusic V."/>
            <person name="Quackenbush J."/>
            <person name="Wahlestedt C."/>
            <person name="Mattick J.S."/>
            <person name="Hume D.A."/>
            <person name="Kai C."/>
            <person name="Sasaki D."/>
            <person name="Tomaru Y."/>
            <person name="Fukuda S."/>
            <person name="Kanamori-Katayama M."/>
            <person name="Suzuki M."/>
            <person name="Aoki J."/>
            <person name="Arakawa T."/>
            <person name="Iida J."/>
            <person name="Imamura K."/>
            <person name="Itoh M."/>
            <person name="Kato T."/>
            <person name="Kawaji H."/>
            <person name="Kawagashira N."/>
            <person name="Kawashima T."/>
            <person name="Kojima M."/>
            <person name="Kondo S."/>
            <person name="Konno H."/>
            <person name="Nakano K."/>
            <person name="Ninomiya N."/>
            <person name="Nishio T."/>
            <person name="Okada M."/>
            <person name="Plessy C."/>
            <person name="Shibata K."/>
            <person name="Shiraki T."/>
            <person name="Suzuki S."/>
            <person name="Tagami M."/>
            <person name="Waki K."/>
            <person name="Watahiki A."/>
            <person name="Okamura-Oho Y."/>
            <person name="Suzuki H."/>
            <person name="Kawai J."/>
            <person name="Hayashizaki Y."/>
        </authorList>
    </citation>
    <scope>NUCLEOTIDE SEQUENCE [LARGE SCALE MRNA] (ISOFORMS 1 AND 3)</scope>
    <source>
        <strain>C57BL/6J</strain>
        <tissue>Brain cortex</tissue>
        <tissue>Cerebellum</tissue>
    </source>
</reference>
<reference key="3">
    <citation type="journal article" date="2004" name="Genome Res.">
        <title>The status, quality, and expansion of the NIH full-length cDNA project: the Mammalian Gene Collection (MGC).</title>
        <authorList>
            <consortium name="The MGC Project Team"/>
        </authorList>
    </citation>
    <scope>NUCLEOTIDE SEQUENCE [LARGE SCALE MRNA] (ISOFORM 3)</scope>
    <source>
        <tissue>Eye</tissue>
    </source>
</reference>
<reference key="4">
    <citation type="journal article" date="2002" name="DNA Res.">
        <title>Prediction of the coding sequences of mouse homologues of KIAA gene: I. The complete nucleotide sequences of 100 mouse KIAA-homologous cDNAs identified by screening of terminal sequences of cDNA clones randomly sampled from size-fractionated libraries.</title>
        <authorList>
            <person name="Okazaki N."/>
            <person name="Kikuno R."/>
            <person name="Ohara R."/>
            <person name="Inamoto S."/>
            <person name="Hara Y."/>
            <person name="Nagase T."/>
            <person name="Ohara O."/>
            <person name="Koga H."/>
        </authorList>
    </citation>
    <scope>NUCLEOTIDE SEQUENCE [LARGE SCALE MRNA] OF 90-1286 (ISOFORM 1)</scope>
</reference>
<reference key="5">
    <citation type="submission" date="2003-08" db="EMBL/GenBank/DDBJ databases">
        <authorList>
            <person name="Okazaki N."/>
            <person name="Kikuno R."/>
            <person name="Nagase T."/>
            <person name="Ohara O."/>
            <person name="Koga H."/>
        </authorList>
    </citation>
    <scope>SEQUENCE REVISION</scope>
</reference>
<reference key="6">
    <citation type="journal article" date="2004" name="Mol. Cell. Proteomics">
        <title>Phosphoproteomic analysis of the developing mouse brain.</title>
        <authorList>
            <person name="Ballif B.A."/>
            <person name="Villen J."/>
            <person name="Beausoleil S.A."/>
            <person name="Schwartz D."/>
            <person name="Gygi S.P."/>
        </authorList>
    </citation>
    <scope>IDENTIFICATION BY MASS SPECTROMETRY [LARGE SCALE ANALYSIS]</scope>
    <source>
        <tissue>Embryonic brain</tissue>
    </source>
</reference>
<reference key="7">
    <citation type="journal article" date="2005" name="Reproduction">
        <title>PAR-1 and the microtubule-associated proteins CLASP2 and dynactin-p50 have specific localisation on mouse meiotic and first mitotic spindles.</title>
        <authorList>
            <person name="Moore C.A."/>
            <person name="Zernicka-Goetz M."/>
        </authorList>
    </citation>
    <scope>SUBCELLULAR LOCATION</scope>
    <scope>DEVELOPMENTAL STAGE</scope>
</reference>
<reference key="8">
    <citation type="journal article" date="2006" name="Mol. Biol. Cell">
        <title>Mammalian CLASP1 and CLASP2 cooperate to ensure mitotic fidelity by regulating spindle and kinetochore function.</title>
        <authorList>
            <person name="Pereira A.L."/>
            <person name="Pereira A.J."/>
            <person name="Maia A.R.R."/>
            <person name="Drabek K."/>
            <person name="Sayas C.L."/>
            <person name="Hergert P.J."/>
            <person name="Lince-Faria M."/>
            <person name="Matos I."/>
            <person name="Duque C."/>
            <person name="Stepanova T."/>
            <person name="Rieder C.L."/>
            <person name="Earnshaw W.C."/>
            <person name="Galjart N."/>
            <person name="Maiato H."/>
        </authorList>
    </citation>
    <scope>FUNCTION</scope>
    <scope>SUBCELLULAR LOCATION</scope>
</reference>
<reference key="9">
    <citation type="journal article" date="2008" name="Cell">
        <title>ACF7 regulates cytoskeletal-focal adhesion dynamics and migration and has ATPase activity.</title>
        <authorList>
            <person name="Wu X."/>
            <person name="Kodama A."/>
            <person name="Fuchs E."/>
        </authorList>
    </citation>
    <scope>INTERACTION WITH MACF1</scope>
</reference>
<reference key="10">
    <citation type="journal article" date="2010" name="Cell">
        <title>A tissue-specific atlas of mouse protein phosphorylation and expression.</title>
        <authorList>
            <person name="Huttlin E.L."/>
            <person name="Jedrychowski M.P."/>
            <person name="Elias J.E."/>
            <person name="Goswami T."/>
            <person name="Rad R."/>
            <person name="Beausoleil S.A."/>
            <person name="Villen J."/>
            <person name="Haas W."/>
            <person name="Sowa M.E."/>
            <person name="Gygi S.P."/>
        </authorList>
    </citation>
    <scope>PHOSPHORYLATION [LARGE SCALE ANALYSIS] AT SER-14; SER-374; SER-376; SER-620 AND SER-947</scope>
    <scope>IDENTIFICATION BY MASS SPECTROMETRY [LARGE SCALE ANALYSIS]</scope>
    <source>
        <tissue>Brain</tissue>
        <tissue>Brown adipose tissue</tissue>
        <tissue>Heart</tissue>
        <tissue>Kidney</tissue>
        <tissue>Liver</tissue>
        <tissue>Lung</tissue>
        <tissue>Pancreas</tissue>
        <tissue>Spleen</tissue>
        <tissue>Testis</tissue>
    </source>
</reference>
<reference key="11">
    <citation type="journal article" date="2017" name="Mol. Cell. Proteomics">
        <title>Characterization of the CLASP2 Protein Interaction Network Identifies SOGA1 as a Microtubule-Associated Protein.</title>
        <authorList>
            <person name="Kruse R."/>
            <person name="Krantz J."/>
            <person name="Barker N."/>
            <person name="Coletta R.L."/>
            <person name="Rafikov R."/>
            <person name="Luo M."/>
            <person name="Hoejlund K."/>
            <person name="Mandarino L.J."/>
            <person name="Langlais P.R."/>
        </authorList>
    </citation>
    <scope>INTERACTION WITH MTCL2</scope>
    <scope>SUBCELLULAR LOCATION</scope>
</reference>
<reference key="12">
    <citation type="journal article" date="2015" name="J. Mol. Biol.">
        <title>CLASP2 has two distinct TOG domains that contribute differently to microtubule dynamics.</title>
        <authorList>
            <person name="Maki T."/>
            <person name="Grimaldi A.D."/>
            <person name="Fuchigami S."/>
            <person name="Kaverina I."/>
            <person name="Hayashi I."/>
        </authorList>
    </citation>
    <scope>X-RAY CRYSTALLOGRAPHY (2.20 ANGSTROMS) OF 642-873</scope>
    <scope>DOMAIN</scope>
</reference>
<accession>Q8BRT1</accession>
<accession>Q8CHE3</accession>
<accession>Q99JI3</accession>
<accession>Q9DB80</accession>